<reference key="1">
    <citation type="journal article" date="1998" name="Nature">
        <title>Analysis of 1.9 Mb of contiguous sequence from chromosome 4 of Arabidopsis thaliana.</title>
        <authorList>
            <person name="Bevan M."/>
            <person name="Bancroft I."/>
            <person name="Bent E."/>
            <person name="Love K."/>
            <person name="Goodman H.M."/>
            <person name="Dean C."/>
            <person name="Bergkamp R."/>
            <person name="Dirkse W."/>
            <person name="van Staveren M."/>
            <person name="Stiekema W."/>
            <person name="Drost L."/>
            <person name="Ridley P."/>
            <person name="Hudson S.-A."/>
            <person name="Patel K."/>
            <person name="Murphy G."/>
            <person name="Piffanelli P."/>
            <person name="Wedler H."/>
            <person name="Wedler E."/>
            <person name="Wambutt R."/>
            <person name="Weitzenegger T."/>
            <person name="Pohl T."/>
            <person name="Terryn N."/>
            <person name="Gielen J."/>
            <person name="Villarroel R."/>
            <person name="De Clercq R."/>
            <person name="van Montagu M."/>
            <person name="Lecharny A."/>
            <person name="Aubourg S."/>
            <person name="Gy I."/>
            <person name="Kreis M."/>
            <person name="Lao N."/>
            <person name="Kavanagh T."/>
            <person name="Hempel S."/>
            <person name="Kotter P."/>
            <person name="Entian K.-D."/>
            <person name="Rieger M."/>
            <person name="Schaefer M."/>
            <person name="Funk B."/>
            <person name="Mueller-Auer S."/>
            <person name="Silvey M."/>
            <person name="James R."/>
            <person name="Monfort A."/>
            <person name="Pons A."/>
            <person name="Puigdomenech P."/>
            <person name="Douka A."/>
            <person name="Voukelatou E."/>
            <person name="Milioni D."/>
            <person name="Hatzopoulos P."/>
            <person name="Piravandi E."/>
            <person name="Obermaier B."/>
            <person name="Hilbert H."/>
            <person name="Duesterhoeft A."/>
            <person name="Moores T."/>
            <person name="Jones J.D.G."/>
            <person name="Eneva T."/>
            <person name="Palme K."/>
            <person name="Benes V."/>
            <person name="Rechmann S."/>
            <person name="Ansorge W."/>
            <person name="Cooke R."/>
            <person name="Berger C."/>
            <person name="Delseny M."/>
            <person name="Voet M."/>
            <person name="Volckaert G."/>
            <person name="Mewes H.-W."/>
            <person name="Klosterman S."/>
            <person name="Schueller C."/>
            <person name="Chalwatzis N."/>
        </authorList>
    </citation>
    <scope>NUCLEOTIDE SEQUENCE [LARGE SCALE GENOMIC DNA]</scope>
    <source>
        <strain>cv. Columbia</strain>
    </source>
</reference>
<reference key="2">
    <citation type="journal article" date="1999" name="Nature">
        <title>Sequence and analysis of chromosome 4 of the plant Arabidopsis thaliana.</title>
        <authorList>
            <person name="Mayer K.F.X."/>
            <person name="Schueller C."/>
            <person name="Wambutt R."/>
            <person name="Murphy G."/>
            <person name="Volckaert G."/>
            <person name="Pohl T."/>
            <person name="Duesterhoeft A."/>
            <person name="Stiekema W."/>
            <person name="Entian K.-D."/>
            <person name="Terryn N."/>
            <person name="Harris B."/>
            <person name="Ansorge W."/>
            <person name="Brandt P."/>
            <person name="Grivell L.A."/>
            <person name="Rieger M."/>
            <person name="Weichselgartner M."/>
            <person name="de Simone V."/>
            <person name="Obermaier B."/>
            <person name="Mache R."/>
            <person name="Mueller M."/>
            <person name="Kreis M."/>
            <person name="Delseny M."/>
            <person name="Puigdomenech P."/>
            <person name="Watson M."/>
            <person name="Schmidtheini T."/>
            <person name="Reichert B."/>
            <person name="Portetelle D."/>
            <person name="Perez-Alonso M."/>
            <person name="Boutry M."/>
            <person name="Bancroft I."/>
            <person name="Vos P."/>
            <person name="Hoheisel J."/>
            <person name="Zimmermann W."/>
            <person name="Wedler H."/>
            <person name="Ridley P."/>
            <person name="Langham S.-A."/>
            <person name="McCullagh B."/>
            <person name="Bilham L."/>
            <person name="Robben J."/>
            <person name="van der Schueren J."/>
            <person name="Grymonprez B."/>
            <person name="Chuang Y.-J."/>
            <person name="Vandenbussche F."/>
            <person name="Braeken M."/>
            <person name="Weltjens I."/>
            <person name="Voet M."/>
            <person name="Bastiaens I."/>
            <person name="Aert R."/>
            <person name="Defoor E."/>
            <person name="Weitzenegger T."/>
            <person name="Bothe G."/>
            <person name="Ramsperger U."/>
            <person name="Hilbert H."/>
            <person name="Braun M."/>
            <person name="Holzer E."/>
            <person name="Brandt A."/>
            <person name="Peters S."/>
            <person name="van Staveren M."/>
            <person name="Dirkse W."/>
            <person name="Mooijman P."/>
            <person name="Klein Lankhorst R."/>
            <person name="Rose M."/>
            <person name="Hauf J."/>
            <person name="Koetter P."/>
            <person name="Berneiser S."/>
            <person name="Hempel S."/>
            <person name="Feldpausch M."/>
            <person name="Lamberth S."/>
            <person name="Van den Daele H."/>
            <person name="De Keyser A."/>
            <person name="Buysshaert C."/>
            <person name="Gielen J."/>
            <person name="Villarroel R."/>
            <person name="De Clercq R."/>
            <person name="van Montagu M."/>
            <person name="Rogers J."/>
            <person name="Cronin A."/>
            <person name="Quail M.A."/>
            <person name="Bray-Allen S."/>
            <person name="Clark L."/>
            <person name="Doggett J."/>
            <person name="Hall S."/>
            <person name="Kay M."/>
            <person name="Lennard N."/>
            <person name="McLay K."/>
            <person name="Mayes R."/>
            <person name="Pettett A."/>
            <person name="Rajandream M.A."/>
            <person name="Lyne M."/>
            <person name="Benes V."/>
            <person name="Rechmann S."/>
            <person name="Borkova D."/>
            <person name="Bloecker H."/>
            <person name="Scharfe M."/>
            <person name="Grimm M."/>
            <person name="Loehnert T.-H."/>
            <person name="Dose S."/>
            <person name="de Haan M."/>
            <person name="Maarse A.C."/>
            <person name="Schaefer M."/>
            <person name="Mueller-Auer S."/>
            <person name="Gabel C."/>
            <person name="Fuchs M."/>
            <person name="Fartmann B."/>
            <person name="Granderath K."/>
            <person name="Dauner D."/>
            <person name="Herzl A."/>
            <person name="Neumann S."/>
            <person name="Argiriou A."/>
            <person name="Vitale D."/>
            <person name="Liguori R."/>
            <person name="Piravandi E."/>
            <person name="Massenet O."/>
            <person name="Quigley F."/>
            <person name="Clabauld G."/>
            <person name="Muendlein A."/>
            <person name="Felber R."/>
            <person name="Schnabl S."/>
            <person name="Hiller R."/>
            <person name="Schmidt W."/>
            <person name="Lecharny A."/>
            <person name="Aubourg S."/>
            <person name="Chefdor F."/>
            <person name="Cooke R."/>
            <person name="Berger C."/>
            <person name="Monfort A."/>
            <person name="Casacuberta E."/>
            <person name="Gibbons T."/>
            <person name="Weber N."/>
            <person name="Vandenbol M."/>
            <person name="Bargues M."/>
            <person name="Terol J."/>
            <person name="Torres A."/>
            <person name="Perez-Perez A."/>
            <person name="Purnelle B."/>
            <person name="Bent E."/>
            <person name="Johnson S."/>
            <person name="Tacon D."/>
            <person name="Jesse T."/>
            <person name="Heijnen L."/>
            <person name="Schwarz S."/>
            <person name="Scholler P."/>
            <person name="Heber S."/>
            <person name="Francs P."/>
            <person name="Bielke C."/>
            <person name="Frishman D."/>
            <person name="Haase D."/>
            <person name="Lemcke K."/>
            <person name="Mewes H.-W."/>
            <person name="Stocker S."/>
            <person name="Zaccaria P."/>
            <person name="Bevan M."/>
            <person name="Wilson R.K."/>
            <person name="de la Bastide M."/>
            <person name="Habermann K."/>
            <person name="Parnell L."/>
            <person name="Dedhia N."/>
            <person name="Gnoj L."/>
            <person name="Schutz K."/>
            <person name="Huang E."/>
            <person name="Spiegel L."/>
            <person name="Sekhon M."/>
            <person name="Murray J."/>
            <person name="Sheet P."/>
            <person name="Cordes M."/>
            <person name="Abu-Threideh J."/>
            <person name="Stoneking T."/>
            <person name="Kalicki J."/>
            <person name="Graves T."/>
            <person name="Harmon G."/>
            <person name="Edwards J."/>
            <person name="Latreille P."/>
            <person name="Courtney L."/>
            <person name="Cloud J."/>
            <person name="Abbott A."/>
            <person name="Scott K."/>
            <person name="Johnson D."/>
            <person name="Minx P."/>
            <person name="Bentley D."/>
            <person name="Fulton B."/>
            <person name="Miller N."/>
            <person name="Greco T."/>
            <person name="Kemp K."/>
            <person name="Kramer J."/>
            <person name="Fulton L."/>
            <person name="Mardis E."/>
            <person name="Dante M."/>
            <person name="Pepin K."/>
            <person name="Hillier L.W."/>
            <person name="Nelson J."/>
            <person name="Spieth J."/>
            <person name="Ryan E."/>
            <person name="Andrews S."/>
            <person name="Geisel C."/>
            <person name="Layman D."/>
            <person name="Du H."/>
            <person name="Ali J."/>
            <person name="Berghoff A."/>
            <person name="Jones K."/>
            <person name="Drone K."/>
            <person name="Cotton M."/>
            <person name="Joshu C."/>
            <person name="Antonoiu B."/>
            <person name="Zidanic M."/>
            <person name="Strong C."/>
            <person name="Sun H."/>
            <person name="Lamar B."/>
            <person name="Yordan C."/>
            <person name="Ma P."/>
            <person name="Zhong J."/>
            <person name="Preston R."/>
            <person name="Vil D."/>
            <person name="Shekher M."/>
            <person name="Matero A."/>
            <person name="Shah R."/>
            <person name="Swaby I.K."/>
            <person name="O'Shaughnessy A."/>
            <person name="Rodriguez M."/>
            <person name="Hoffman J."/>
            <person name="Till S."/>
            <person name="Granat S."/>
            <person name="Shohdy N."/>
            <person name="Hasegawa A."/>
            <person name="Hameed A."/>
            <person name="Lodhi M."/>
            <person name="Johnson A."/>
            <person name="Chen E."/>
            <person name="Marra M.A."/>
            <person name="Martienssen R."/>
            <person name="McCombie W.R."/>
        </authorList>
    </citation>
    <scope>NUCLEOTIDE SEQUENCE [LARGE SCALE GENOMIC DNA]</scope>
    <source>
        <strain>cv. Columbia</strain>
    </source>
</reference>
<reference key="3">
    <citation type="journal article" date="2017" name="Plant J.">
        <title>Araport11: a complete reannotation of the Arabidopsis thaliana reference genome.</title>
        <authorList>
            <person name="Cheng C.Y."/>
            <person name="Krishnakumar V."/>
            <person name="Chan A.P."/>
            <person name="Thibaud-Nissen F."/>
            <person name="Schobel S."/>
            <person name="Town C.D."/>
        </authorList>
    </citation>
    <scope>GENOME REANNOTATION</scope>
    <source>
        <strain>cv. Columbia</strain>
    </source>
</reference>
<reference key="4">
    <citation type="journal article" date="2003" name="Science">
        <title>Empirical analysis of transcriptional activity in the Arabidopsis genome.</title>
        <authorList>
            <person name="Yamada K."/>
            <person name="Lim J."/>
            <person name="Dale J.M."/>
            <person name="Chen H."/>
            <person name="Shinn P."/>
            <person name="Palm C.J."/>
            <person name="Southwick A.M."/>
            <person name="Wu H.C."/>
            <person name="Kim C.J."/>
            <person name="Nguyen M."/>
            <person name="Pham P.K."/>
            <person name="Cheuk R.F."/>
            <person name="Karlin-Newmann G."/>
            <person name="Liu S.X."/>
            <person name="Lam B."/>
            <person name="Sakano H."/>
            <person name="Wu T."/>
            <person name="Yu G."/>
            <person name="Miranda M."/>
            <person name="Quach H.L."/>
            <person name="Tripp M."/>
            <person name="Chang C.H."/>
            <person name="Lee J.M."/>
            <person name="Toriumi M.J."/>
            <person name="Chan M.M."/>
            <person name="Tang C.C."/>
            <person name="Onodera C.S."/>
            <person name="Deng J.M."/>
            <person name="Akiyama K."/>
            <person name="Ansari Y."/>
            <person name="Arakawa T."/>
            <person name="Banh J."/>
            <person name="Banno F."/>
            <person name="Bowser L."/>
            <person name="Brooks S.Y."/>
            <person name="Carninci P."/>
            <person name="Chao Q."/>
            <person name="Choy N."/>
            <person name="Enju A."/>
            <person name="Goldsmith A.D."/>
            <person name="Gurjal M."/>
            <person name="Hansen N.F."/>
            <person name="Hayashizaki Y."/>
            <person name="Johnson-Hopson C."/>
            <person name="Hsuan V.W."/>
            <person name="Iida K."/>
            <person name="Karnes M."/>
            <person name="Khan S."/>
            <person name="Koesema E."/>
            <person name="Ishida J."/>
            <person name="Jiang P.X."/>
            <person name="Jones T."/>
            <person name="Kawai J."/>
            <person name="Kamiya A."/>
            <person name="Meyers C."/>
            <person name="Nakajima M."/>
            <person name="Narusaka M."/>
            <person name="Seki M."/>
            <person name="Sakurai T."/>
            <person name="Satou M."/>
            <person name="Tamse R."/>
            <person name="Vaysberg M."/>
            <person name="Wallender E.K."/>
            <person name="Wong C."/>
            <person name="Yamamura Y."/>
            <person name="Yuan S."/>
            <person name="Shinozaki K."/>
            <person name="Davis R.W."/>
            <person name="Theologis A."/>
            <person name="Ecker J.R."/>
        </authorList>
    </citation>
    <scope>NUCLEOTIDE SEQUENCE [LARGE SCALE MRNA]</scope>
    <source>
        <strain>cv. Columbia</strain>
    </source>
</reference>
<reference key="5">
    <citation type="submission" date="2005-03" db="EMBL/GenBank/DDBJ databases">
        <title>Large-scale analysis of RIKEN Arabidopsis full-length (RAFL) cDNAs.</title>
        <authorList>
            <person name="Totoki Y."/>
            <person name="Seki M."/>
            <person name="Ishida J."/>
            <person name="Nakajima M."/>
            <person name="Enju A."/>
            <person name="Kamiya A."/>
            <person name="Narusaka M."/>
            <person name="Shin-i T."/>
            <person name="Nakagawa M."/>
            <person name="Sakamoto N."/>
            <person name="Oishi K."/>
            <person name="Kohara Y."/>
            <person name="Kobayashi M."/>
            <person name="Toyoda A."/>
            <person name="Sakaki Y."/>
            <person name="Sakurai T."/>
            <person name="Iida K."/>
            <person name="Akiyama K."/>
            <person name="Satou M."/>
            <person name="Toyoda T."/>
            <person name="Konagaya A."/>
            <person name="Carninci P."/>
            <person name="Kawai J."/>
            <person name="Hayashizaki Y."/>
            <person name="Shinozaki K."/>
        </authorList>
    </citation>
    <scope>NUCLEOTIDE SEQUENCE [LARGE SCALE MRNA]</scope>
    <source>
        <strain>cv. Columbia</strain>
    </source>
</reference>
<reference key="6">
    <citation type="journal article" date="2000" name="Plant Physiol.">
        <title>The cellulose synthase superfamily.</title>
        <authorList>
            <person name="Richmond T.A."/>
            <person name="Somerville C.R."/>
        </authorList>
    </citation>
    <scope>GENE FAMILY</scope>
    <scope>NOMENCLATURE</scope>
</reference>
<organism>
    <name type="scientific">Arabidopsis thaliana</name>
    <name type="common">Mouse-ear cress</name>
    <dbReference type="NCBI Taxonomy" id="3702"/>
    <lineage>
        <taxon>Eukaryota</taxon>
        <taxon>Viridiplantae</taxon>
        <taxon>Streptophyta</taxon>
        <taxon>Embryophyta</taxon>
        <taxon>Tracheophyta</taxon>
        <taxon>Spermatophyta</taxon>
        <taxon>Magnoliopsida</taxon>
        <taxon>eudicotyledons</taxon>
        <taxon>Gunneridae</taxon>
        <taxon>Pentapetalae</taxon>
        <taxon>rosids</taxon>
        <taxon>malvids</taxon>
        <taxon>Brassicales</taxon>
        <taxon>Brassicaceae</taxon>
        <taxon>Camelineae</taxon>
        <taxon>Arabidopsis</taxon>
    </lineage>
</organism>
<feature type="chain" id="PRO_0000319326" description="Probable glucomannan 4-beta-mannosyltransferase 1">
    <location>
        <begin position="1"/>
        <end position="553"/>
    </location>
</feature>
<feature type="transmembrane region" description="Helical" evidence="2">
    <location>
        <begin position="64"/>
        <end position="84"/>
    </location>
</feature>
<feature type="transmembrane region" description="Helical" evidence="2">
    <location>
        <begin position="395"/>
        <end position="415"/>
    </location>
</feature>
<feature type="transmembrane region" description="Helical" evidence="2">
    <location>
        <begin position="431"/>
        <end position="451"/>
    </location>
</feature>
<feature type="transmembrane region" description="Helical" evidence="2">
    <location>
        <begin position="510"/>
        <end position="530"/>
    </location>
</feature>
<feature type="transmembrane region" description="Helical" evidence="2">
    <location>
        <begin position="531"/>
        <end position="551"/>
    </location>
</feature>
<feature type="active site" evidence="2">
    <location>
        <position position="163"/>
    </location>
</feature>
<feature type="active site" evidence="2">
    <location>
        <position position="316"/>
    </location>
</feature>
<feature type="binding site" evidence="2">
    <location>
        <position position="222"/>
    </location>
    <ligand>
        <name>substrate</name>
    </ligand>
</feature>
<feature type="binding site" evidence="2">
    <location>
        <position position="224"/>
    </location>
    <ligand>
        <name>substrate</name>
    </ligand>
</feature>
<feature type="sequence conflict" description="In Ref. 5; BAD94550." evidence="4" ref="5">
    <original>N</original>
    <variation>D</variation>
    <location>
        <position position="455"/>
    </location>
</feature>
<protein>
    <recommendedName>
        <fullName evidence="4">Probable glucomannan 4-beta-mannosyltransferase 1</fullName>
        <ecNumber evidence="1">2.4.1.32</ecNumber>
    </recommendedName>
    <alternativeName>
        <fullName evidence="3">Cellulose synthase-like protein A1</fullName>
        <shortName evidence="3">AtCslA1</shortName>
    </alternativeName>
    <alternativeName>
        <fullName evidence="4">Glucomannan synthase</fullName>
    </alternativeName>
    <alternativeName>
        <fullName evidence="4">Mannan synthase 1</fullName>
    </alternativeName>
</protein>
<dbReference type="EC" id="2.4.1.32" evidence="1"/>
<dbReference type="EMBL" id="Z97341">
    <property type="protein sequence ID" value="CAB10434.1"/>
    <property type="status" value="ALT_SEQ"/>
    <property type="molecule type" value="Genomic_DNA"/>
</dbReference>
<dbReference type="EMBL" id="AL161544">
    <property type="protein sequence ID" value="CAB78701.1"/>
    <property type="status" value="ALT_SEQ"/>
    <property type="molecule type" value="Genomic_DNA"/>
</dbReference>
<dbReference type="EMBL" id="CP002687">
    <property type="status" value="NOT_ANNOTATED_CDS"/>
    <property type="molecule type" value="Genomic_DNA"/>
</dbReference>
<dbReference type="EMBL" id="BT004213">
    <property type="protein sequence ID" value="AAO42230.1"/>
    <property type="molecule type" value="mRNA"/>
</dbReference>
<dbReference type="EMBL" id="AK220975">
    <property type="protein sequence ID" value="BAD94550.1"/>
    <property type="status" value="ALT_INIT"/>
    <property type="molecule type" value="mRNA"/>
</dbReference>
<dbReference type="EMBL" id="AK221869">
    <property type="protein sequence ID" value="BAD94168.1"/>
    <property type="status" value="ALT_FRAME"/>
    <property type="molecule type" value="mRNA"/>
</dbReference>
<dbReference type="PIR" id="H71432">
    <property type="entry name" value="H71432"/>
</dbReference>
<dbReference type="FunCoup" id="Q84W54">
    <property type="interactions" value="20"/>
</dbReference>
<dbReference type="STRING" id="3702.Q84W54"/>
<dbReference type="CAZy" id="GT2">
    <property type="family name" value="Glycosyltransferase Family 2"/>
</dbReference>
<dbReference type="PaxDb" id="3702-AT4G16590.1"/>
<dbReference type="ProteomicsDB" id="224516"/>
<dbReference type="Araport" id="AT4G16590"/>
<dbReference type="TAIR" id="AT4G16590">
    <property type="gene designation" value="CSLA01"/>
</dbReference>
<dbReference type="eggNOG" id="ENOG502QR7J">
    <property type="taxonomic scope" value="Eukaryota"/>
</dbReference>
<dbReference type="InParanoid" id="Q84W54"/>
<dbReference type="PhylomeDB" id="Q84W54"/>
<dbReference type="BioCyc" id="ARA:AT4G16590-MONOMER"/>
<dbReference type="PRO" id="PR:Q84W54"/>
<dbReference type="Proteomes" id="UP000006548">
    <property type="component" value="Chromosome 4"/>
</dbReference>
<dbReference type="ExpressionAtlas" id="Q84W54">
    <property type="expression patterns" value="baseline and differential"/>
</dbReference>
<dbReference type="GO" id="GO:0005794">
    <property type="term" value="C:Golgi apparatus"/>
    <property type="evidence" value="ECO:0000318"/>
    <property type="project" value="GO_Central"/>
</dbReference>
<dbReference type="GO" id="GO:0000139">
    <property type="term" value="C:Golgi membrane"/>
    <property type="evidence" value="ECO:0007669"/>
    <property type="project" value="UniProtKB-SubCell"/>
</dbReference>
<dbReference type="GO" id="GO:0047259">
    <property type="term" value="F:glucomannan 4-beta-mannosyltransferase activity"/>
    <property type="evidence" value="ECO:0007669"/>
    <property type="project" value="UniProtKB-EC"/>
</dbReference>
<dbReference type="GO" id="GO:0051753">
    <property type="term" value="F:mannan synthase activity"/>
    <property type="evidence" value="ECO:0000318"/>
    <property type="project" value="GO_Central"/>
</dbReference>
<dbReference type="GO" id="GO:0071555">
    <property type="term" value="P:cell wall organization"/>
    <property type="evidence" value="ECO:0007669"/>
    <property type="project" value="UniProtKB-KW"/>
</dbReference>
<dbReference type="FunFam" id="3.90.550.10:FF:000015">
    <property type="entry name" value="Glucomannan 4-beta-mannosyltransferase 9"/>
    <property type="match status" value="1"/>
</dbReference>
<dbReference type="Gene3D" id="3.90.550.10">
    <property type="entry name" value="Spore Coat Polysaccharide Biosynthesis Protein SpsA, Chain A"/>
    <property type="match status" value="1"/>
</dbReference>
<dbReference type="InterPro" id="IPR001173">
    <property type="entry name" value="Glyco_trans_2-like"/>
</dbReference>
<dbReference type="InterPro" id="IPR029044">
    <property type="entry name" value="Nucleotide-diphossugar_trans"/>
</dbReference>
<dbReference type="PANTHER" id="PTHR32044:SF73">
    <property type="entry name" value="GLUCOMANNAN 4-BETA-MANNOSYLTRANSFERASE 1-RELATED"/>
    <property type="match status" value="1"/>
</dbReference>
<dbReference type="PANTHER" id="PTHR32044">
    <property type="entry name" value="GLUCOMANNAN 4-BETA-MANNOSYLTRANSFERASE 9"/>
    <property type="match status" value="1"/>
</dbReference>
<dbReference type="Pfam" id="PF13632">
    <property type="entry name" value="Glyco_trans_2_3"/>
    <property type="match status" value="1"/>
</dbReference>
<dbReference type="SUPFAM" id="SSF53448">
    <property type="entry name" value="Nucleotide-diphospho-sugar transferases"/>
    <property type="match status" value="1"/>
</dbReference>
<keyword id="KW-0961">Cell wall biogenesis/degradation</keyword>
<keyword id="KW-0328">Glycosyltransferase</keyword>
<keyword id="KW-0333">Golgi apparatus</keyword>
<keyword id="KW-0472">Membrane</keyword>
<keyword id="KW-1185">Reference proteome</keyword>
<keyword id="KW-0808">Transferase</keyword>
<keyword id="KW-0812">Transmembrane</keyword>
<keyword id="KW-1133">Transmembrane helix</keyword>
<accession>Q84W54</accession>
<accession>F4JMI4</accession>
<accession>O23502</accession>
<accession>Q56X10</accession>
<accession>Q56ZJ0</accession>
<evidence type="ECO:0000250" key="1">
    <source>
        <dbReference type="UniProtKB" id="Q9LZR3"/>
    </source>
</evidence>
<evidence type="ECO:0000255" key="2"/>
<evidence type="ECO:0000303" key="3">
    <source>
    </source>
</evidence>
<evidence type="ECO:0000305" key="4"/>
<proteinExistence type="evidence at transcript level"/>
<comment type="function">
    <text evidence="1">Probable mannan synthase which consists of a 4-beta-mannosyltransferase activity on mannan using GDP-mannose. The beta-1,4-mannan product is the backbone for galactomannan synthesis by galactomannan galactosyltransferase. Galactomannan is a noncellulosic polysaccharides of plant cell wall.</text>
</comment>
<comment type="catalytic activity">
    <reaction evidence="1">
        <text>GDP-mannose + (glucomannan)n = GDP + (glucomannan)n+1.</text>
        <dbReference type="EC" id="2.4.1.32"/>
    </reaction>
</comment>
<comment type="subcellular location">
    <subcellularLocation>
        <location evidence="4">Golgi apparatus membrane</location>
        <topology evidence="4">Multi-pass membrane protein</topology>
    </subcellularLocation>
</comment>
<comment type="similarity">
    <text evidence="4">Belongs to the glycosyltransferase 2 family. Plant cellulose synthase-like A subfamily.</text>
</comment>
<comment type="sequence caution" evidence="4">
    <conflict type="frameshift">
        <sequence resource="EMBL-CDS" id="BAD94168"/>
    </conflict>
</comment>
<comment type="sequence caution" evidence="4">
    <conflict type="erroneous initiation">
        <sequence resource="EMBL-CDS" id="BAD94550"/>
    </conflict>
    <text>Truncated N-terminus.</text>
</comment>
<comment type="sequence caution" evidence="4">
    <conflict type="erroneous gene model prediction">
        <sequence resource="EMBL-CDS" id="CAB10434"/>
    </conflict>
</comment>
<comment type="sequence caution" evidence="4">
    <conflict type="miscellaneous discrepancy">
        <sequence resource="EMBL-CDS" id="CAB10434"/>
    </conflict>
    <text>Sequencing errors.</text>
</comment>
<comment type="sequence caution" evidence="4">
    <conflict type="erroneous gene model prediction">
        <sequence resource="EMBL-CDS" id="CAB78701"/>
    </conflict>
</comment>
<comment type="sequence caution" evidence="4">
    <conflict type="miscellaneous discrepancy">
        <sequence resource="EMBL-CDS" id="CAB78701"/>
    </conflict>
    <text>Sequencing errors.</text>
</comment>
<sequence>MSLFLKPFLFLYDTTLSLLLLLFNGWSLEDTAAAQKRREADKNAAETEWIQLQYLWTKTRSVVLLPVFKGLVVMCLVLSIIVFFESFYMNFVILFVKLFKRKPHKVYKWEAMQEDVEVGPDNYPMVLIQIPMYNEKEVFQLSIAAICSLVWPSSRLVVQVVDDSTDPAVREGVDVEIAKWQSQGINIRCERRDNRNGYKAGAMKEALTQSYVKQCDFVAVFDADFQPEPDYLIRAVPFLVHNPDVALVQARWIFVNANKCLMTRMQEMSLNYHFKVEQESGSTRHAFFGFNGTAGVWRISAMEAAGGWKSRTTVEDMDLAVRVGLHGWKFVYLNDLTVRNELPSKFKAYRFQQHRWSCGPANLFRKMTMEIIFNKRVSIWKKFYVIYSFFFVRKVAVHFLTFFFYCIIVPTSVFFPEIHIPSWSTIYVPSLISIFHTLATPRSFYLVIFWVLFENVMAMHRTKGTCIGLLEGGRVNEWVVTEKLGDALKSKLLSRVVQRKSCYQRVNSKEVMVGVYILGCALYGLIYGHTWLHFYLFLQATAFFVSGFGFVGT</sequence>
<name>CSLA1_ARATH</name>
<gene>
    <name evidence="3" type="primary">CSLA1</name>
    <name type="ordered locus">At4g16590</name>
    <name type="ORF">dl4320w</name>
    <name type="ORF">FCAALL.402</name>
</gene>